<dbReference type="EMBL" id="X51655">
    <property type="protein sequence ID" value="CAA35967.1"/>
    <property type="molecule type" value="Genomic_DNA"/>
</dbReference>
<dbReference type="EMBL" id="L14598">
    <property type="status" value="NOT_ANNOTATED_CDS"/>
    <property type="molecule type" value="Genomic_DNA"/>
</dbReference>
<dbReference type="EMBL" id="Z37500">
    <property type="protein sequence ID" value="CAA85729.1"/>
    <property type="molecule type" value="Genomic_DNA"/>
</dbReference>
<dbReference type="EMBL" id="U14003">
    <property type="protein sequence ID" value="AAA97212.1"/>
    <property type="molecule type" value="Genomic_DNA"/>
</dbReference>
<dbReference type="EMBL" id="U00096">
    <property type="protein sequence ID" value="AAC77272.1"/>
    <property type="molecule type" value="Genomic_DNA"/>
</dbReference>
<dbReference type="EMBL" id="AP009048">
    <property type="protein sequence ID" value="BAE78309.1"/>
    <property type="molecule type" value="Genomic_DNA"/>
</dbReference>
<dbReference type="PIR" id="S56541">
    <property type="entry name" value="S56541"/>
</dbReference>
<dbReference type="RefSeq" id="NP_418736.3">
    <property type="nucleotide sequence ID" value="NC_000913.3"/>
</dbReference>
<dbReference type="RefSeq" id="WP_000066547.1">
    <property type="nucleotide sequence ID" value="NZ_LN832404.1"/>
</dbReference>
<dbReference type="PDB" id="1BF8">
    <property type="method" value="NMR"/>
    <property type="chains" value="A=37-241"/>
</dbReference>
<dbReference type="PDB" id="1KIU">
    <property type="method" value="X-ray"/>
    <property type="resolution" value="3.00 A"/>
    <property type="chains" value="A/C/E/G/I/K/M/O=37-241"/>
</dbReference>
<dbReference type="PDB" id="1KLF">
    <property type="method" value="X-ray"/>
    <property type="resolution" value="2.79 A"/>
    <property type="chains" value="A/C/E/G/I/K/M/O=37-241"/>
</dbReference>
<dbReference type="PDB" id="1QUN">
    <property type="method" value="X-ray"/>
    <property type="resolution" value="2.80 A"/>
    <property type="chains" value="A/C/E/G/I/K/M/O=37-241"/>
</dbReference>
<dbReference type="PDB" id="1ZE3">
    <property type="method" value="X-ray"/>
    <property type="resolution" value="1.84 A"/>
    <property type="chains" value="C=37-241"/>
</dbReference>
<dbReference type="PDB" id="3BWU">
    <property type="method" value="X-ray"/>
    <property type="resolution" value="1.76 A"/>
    <property type="chains" value="C=37-241"/>
</dbReference>
<dbReference type="PDB" id="3JWN">
    <property type="method" value="X-ray"/>
    <property type="resolution" value="2.69 A"/>
    <property type="chains" value="C/I=37-241"/>
</dbReference>
<dbReference type="PDB" id="3RFZ">
    <property type="method" value="X-ray"/>
    <property type="resolution" value="2.80 A"/>
    <property type="chains" value="C/F=37-241"/>
</dbReference>
<dbReference type="PDB" id="3SQB">
    <property type="method" value="X-ray"/>
    <property type="resolution" value="3.20 A"/>
    <property type="chains" value="A/C/E/G=37-241"/>
</dbReference>
<dbReference type="PDB" id="4DWH">
    <property type="method" value="X-ray"/>
    <property type="resolution" value="2.50 A"/>
    <property type="chains" value="A/C=37-241"/>
</dbReference>
<dbReference type="PDB" id="4J3O">
    <property type="method" value="X-ray"/>
    <property type="resolution" value="3.80 A"/>
    <property type="chains" value="C=37-241"/>
</dbReference>
<dbReference type="PDB" id="6E14">
    <property type="method" value="EM"/>
    <property type="resolution" value="4.00 A"/>
    <property type="chains" value="C=1-241"/>
</dbReference>
<dbReference type="PDB" id="6E15">
    <property type="method" value="EM"/>
    <property type="resolution" value="6.20 A"/>
    <property type="chains" value="C=1-241"/>
</dbReference>
<dbReference type="PDB" id="6SWH">
    <property type="method" value="X-ray"/>
    <property type="resolution" value="2.80 A"/>
    <property type="chains" value="A/D=37-241"/>
</dbReference>
<dbReference type="PDB" id="7B0W">
    <property type="method" value="X-ray"/>
    <property type="resolution" value="1.75 A"/>
    <property type="chains" value="C=37-241"/>
</dbReference>
<dbReference type="PDB" id="7B0X">
    <property type="method" value="X-ray"/>
    <property type="resolution" value="1.70 A"/>
    <property type="chains" value="C=37-241"/>
</dbReference>
<dbReference type="PDB" id="7SZO">
    <property type="method" value="X-ray"/>
    <property type="resolution" value="2.80 A"/>
    <property type="chains" value="C/I=37-241"/>
</dbReference>
<dbReference type="PDB" id="9BOG">
    <property type="method" value="EM"/>
    <property type="resolution" value="3.99 A"/>
    <property type="chains" value="C=37-241"/>
</dbReference>
<dbReference type="PDBsum" id="1BF8"/>
<dbReference type="PDBsum" id="1KIU"/>
<dbReference type="PDBsum" id="1KLF"/>
<dbReference type="PDBsum" id="1QUN"/>
<dbReference type="PDBsum" id="1ZE3"/>
<dbReference type="PDBsum" id="3BWU"/>
<dbReference type="PDBsum" id="3JWN"/>
<dbReference type="PDBsum" id="3RFZ"/>
<dbReference type="PDBsum" id="3SQB"/>
<dbReference type="PDBsum" id="4DWH"/>
<dbReference type="PDBsum" id="4J3O"/>
<dbReference type="PDBsum" id="6E14"/>
<dbReference type="PDBsum" id="6E15"/>
<dbReference type="PDBsum" id="6SWH"/>
<dbReference type="PDBsum" id="7B0W"/>
<dbReference type="PDBsum" id="7B0X"/>
<dbReference type="PDBsum" id="7SZO"/>
<dbReference type="PDBsum" id="9BOG"/>
<dbReference type="BMRB" id="P31697"/>
<dbReference type="EMDB" id="EMD-8953"/>
<dbReference type="EMDB" id="EMD-8954"/>
<dbReference type="SMR" id="P31697"/>
<dbReference type="BioGRID" id="4262754">
    <property type="interactions" value="256"/>
</dbReference>
<dbReference type="DIP" id="DIP-9611N"/>
<dbReference type="FunCoup" id="P31697">
    <property type="interactions" value="113"/>
</dbReference>
<dbReference type="IntAct" id="P31697">
    <property type="interactions" value="8"/>
</dbReference>
<dbReference type="MINT" id="P31697"/>
<dbReference type="STRING" id="511145.b4316"/>
<dbReference type="UniLectin" id="P31697"/>
<dbReference type="jPOST" id="P31697"/>
<dbReference type="PaxDb" id="511145-b4316"/>
<dbReference type="EnsemblBacteria" id="AAC77272">
    <property type="protein sequence ID" value="AAC77272"/>
    <property type="gene ID" value="b4316"/>
</dbReference>
<dbReference type="GeneID" id="948843"/>
<dbReference type="KEGG" id="ecj:JW4279"/>
<dbReference type="KEGG" id="eco:b4316"/>
<dbReference type="KEGG" id="ecoc:C3026_23315"/>
<dbReference type="PATRIC" id="fig|1411691.4.peg.2376"/>
<dbReference type="EchoBASE" id="EB0306"/>
<dbReference type="eggNOG" id="COG3121">
    <property type="taxonomic scope" value="Bacteria"/>
</dbReference>
<dbReference type="HOGENOM" id="CLU_070768_2_1_6"/>
<dbReference type="InParanoid" id="P31697"/>
<dbReference type="OMA" id="ALTPKMN"/>
<dbReference type="OrthoDB" id="9131059at2"/>
<dbReference type="PhylomeDB" id="P31697"/>
<dbReference type="BioCyc" id="EcoCyc:EG10310-MONOMER"/>
<dbReference type="EvolutionaryTrace" id="P31697"/>
<dbReference type="PRO" id="PR:P31697"/>
<dbReference type="Proteomes" id="UP000000625">
    <property type="component" value="Chromosome"/>
</dbReference>
<dbReference type="GO" id="GO:0030288">
    <property type="term" value="C:outer membrane-bounded periplasmic space"/>
    <property type="evidence" value="ECO:0000314"/>
    <property type="project" value="EcoCyc"/>
</dbReference>
<dbReference type="GO" id="GO:0044183">
    <property type="term" value="F:protein folding chaperone"/>
    <property type="evidence" value="ECO:0000314"/>
    <property type="project" value="EcoCyc"/>
</dbReference>
<dbReference type="GO" id="GO:0071555">
    <property type="term" value="P:cell wall organization"/>
    <property type="evidence" value="ECO:0007669"/>
    <property type="project" value="InterPro"/>
</dbReference>
<dbReference type="GO" id="GO:0061077">
    <property type="term" value="P:chaperone-mediated protein folding"/>
    <property type="evidence" value="ECO:0000314"/>
    <property type="project" value="EcoCyc"/>
</dbReference>
<dbReference type="FunFam" id="2.60.40.10:FF:000458">
    <property type="entry name" value="Molecular chaperone FimC"/>
    <property type="match status" value="1"/>
</dbReference>
<dbReference type="Gene3D" id="2.60.40.10">
    <property type="entry name" value="Immunoglobulins"/>
    <property type="match status" value="2"/>
</dbReference>
<dbReference type="InterPro" id="IPR013783">
    <property type="entry name" value="Ig-like_fold"/>
</dbReference>
<dbReference type="InterPro" id="IPR008962">
    <property type="entry name" value="PapD-like_sf"/>
</dbReference>
<dbReference type="InterPro" id="IPR050643">
    <property type="entry name" value="Periplasmic_pilus_chap"/>
</dbReference>
<dbReference type="InterPro" id="IPR036316">
    <property type="entry name" value="Pili_assmbl_chap_C_dom_sf"/>
</dbReference>
<dbReference type="InterPro" id="IPR001829">
    <property type="entry name" value="Pili_assmbl_chaperone_bac"/>
</dbReference>
<dbReference type="InterPro" id="IPR016148">
    <property type="entry name" value="Pili_assmbl_chaperone_C"/>
</dbReference>
<dbReference type="InterPro" id="IPR018046">
    <property type="entry name" value="Pili_assmbl_chaperone_CS"/>
</dbReference>
<dbReference type="InterPro" id="IPR016147">
    <property type="entry name" value="Pili_assmbl_chaperone_N"/>
</dbReference>
<dbReference type="PANTHER" id="PTHR30251:SF11">
    <property type="entry name" value="CHAPERONE PROTEIN FIMC-RELATED"/>
    <property type="match status" value="1"/>
</dbReference>
<dbReference type="PANTHER" id="PTHR30251">
    <property type="entry name" value="PILUS ASSEMBLY CHAPERONE"/>
    <property type="match status" value="1"/>
</dbReference>
<dbReference type="Pfam" id="PF02753">
    <property type="entry name" value="PapD_C"/>
    <property type="match status" value="1"/>
</dbReference>
<dbReference type="Pfam" id="PF00345">
    <property type="entry name" value="PapD_N"/>
    <property type="match status" value="1"/>
</dbReference>
<dbReference type="PRINTS" id="PR00969">
    <property type="entry name" value="CHAPERONPILI"/>
</dbReference>
<dbReference type="SUPFAM" id="SSF49354">
    <property type="entry name" value="PapD-like"/>
    <property type="match status" value="1"/>
</dbReference>
<dbReference type="SUPFAM" id="SSF49584">
    <property type="entry name" value="Periplasmic chaperone C-domain"/>
    <property type="match status" value="1"/>
</dbReference>
<dbReference type="PROSITE" id="PS00635">
    <property type="entry name" value="PILI_CHAPERONE"/>
    <property type="match status" value="1"/>
</dbReference>
<accession>P31697</accession>
<accession>P71220</accession>
<accession>Q2M5Z7</accession>
<reference key="1">
    <citation type="journal article" date="1992" name="Res. Microbiol.">
        <title>FimC, a chaperone-like periplasmic protein of Escherichia coli involved in biogenesis of type 1 fimbriae.</title>
        <authorList>
            <person name="Klemm P."/>
        </authorList>
    </citation>
    <scope>NUCLEOTIDE SEQUENCE [GENOMIC DNA]</scope>
    <scope>PROTEIN SEQUENCE OF 37-51</scope>
    <source>
        <strain>K12</strain>
    </source>
</reference>
<reference key="2">
    <citation type="journal article" date="1993" name="Proc. Natl. Acad. Sci. U.S.A.">
        <title>FimC is a periplasmic PapD-like chaperone that directs assembly of type 1 pili in bacteria.</title>
        <authorList>
            <person name="Jones C.H."/>
            <person name="Pinkner J.S."/>
            <person name="Nicholes A.V."/>
            <person name="Slonim L.N."/>
            <person name="Abraham S.N."/>
            <person name="Hultgren S.J."/>
        </authorList>
    </citation>
    <scope>NUCLEOTIDE SEQUENCE [GENOMIC DNA]</scope>
    <source>
        <strain>Clinical isolate 149</strain>
    </source>
</reference>
<reference key="3">
    <citation type="journal article" date="1996" name="J. Med. Microbiol.">
        <title>Analysis of the fim cluster of an avian O2 strain of Escherichia coli: serogroup-specific sites within fimA and nucleotide sequence of fimI.</title>
        <authorList>
            <person name="Marc D."/>
            <person name="Dho-Moulin M."/>
        </authorList>
    </citation>
    <scope>NUCLEOTIDE SEQUENCE [GENOMIC DNA]</scope>
    <source>
        <strain>O2:K1:H+ / MT78</strain>
    </source>
</reference>
<reference key="4">
    <citation type="journal article" date="1995" name="Nucleic Acids Res.">
        <title>Analysis of the Escherichia coli genome VI: DNA sequence of the region from 92.8 through 100 minutes.</title>
        <authorList>
            <person name="Burland V.D."/>
            <person name="Plunkett G. III"/>
            <person name="Sofia H.J."/>
            <person name="Daniels D.L."/>
            <person name="Blattner F.R."/>
        </authorList>
    </citation>
    <scope>NUCLEOTIDE SEQUENCE [LARGE SCALE GENOMIC DNA]</scope>
    <source>
        <strain>K12 / MG1655 / ATCC 47076</strain>
    </source>
</reference>
<reference key="5">
    <citation type="journal article" date="1997" name="Science">
        <title>The complete genome sequence of Escherichia coli K-12.</title>
        <authorList>
            <person name="Blattner F.R."/>
            <person name="Plunkett G. III"/>
            <person name="Bloch C.A."/>
            <person name="Perna N.T."/>
            <person name="Burland V."/>
            <person name="Riley M."/>
            <person name="Collado-Vides J."/>
            <person name="Glasner J.D."/>
            <person name="Rode C.K."/>
            <person name="Mayhew G.F."/>
            <person name="Gregor J."/>
            <person name="Davis N.W."/>
            <person name="Kirkpatrick H.A."/>
            <person name="Goeden M.A."/>
            <person name="Rose D.J."/>
            <person name="Mau B."/>
            <person name="Shao Y."/>
        </authorList>
    </citation>
    <scope>NUCLEOTIDE SEQUENCE [LARGE SCALE GENOMIC DNA]</scope>
    <source>
        <strain>K12 / MG1655 / ATCC 47076</strain>
    </source>
</reference>
<reference key="6">
    <citation type="journal article" date="2006" name="Mol. Syst. Biol.">
        <title>Highly accurate genome sequences of Escherichia coli K-12 strains MG1655 and W3110.</title>
        <authorList>
            <person name="Hayashi K."/>
            <person name="Morooka N."/>
            <person name="Yamamoto Y."/>
            <person name="Fujita K."/>
            <person name="Isono K."/>
            <person name="Choi S."/>
            <person name="Ohtsubo E."/>
            <person name="Baba T."/>
            <person name="Wanner B.L."/>
            <person name="Mori H."/>
            <person name="Horiuchi T."/>
        </authorList>
    </citation>
    <scope>NUCLEOTIDE SEQUENCE [LARGE SCALE GENOMIC DNA]</scope>
    <source>
        <strain>K12 / W3110 / ATCC 27325 / DSM 5911</strain>
    </source>
</reference>
<reference key="7">
    <citation type="journal article" date="1998" name="Nat. Struct. Biol.">
        <title>NMR solution structure of the periplasmic chaperone FimC.</title>
        <authorList>
            <person name="Pellecchia M."/>
            <person name="Guntert P."/>
            <person name="Glockshuber R."/>
            <person name="Wuethrich K."/>
        </authorList>
    </citation>
    <scope>STRUCTURE BY NMR</scope>
</reference>
<gene>
    <name type="primary">fimC</name>
    <name type="ordered locus">b4316</name>
    <name type="ordered locus">JW4279</name>
</gene>
<proteinExistence type="evidence at protein level"/>
<name>FIMC_ECOLI</name>
<protein>
    <recommendedName>
        <fullName>Chaperone protein FimC</fullName>
    </recommendedName>
</protein>
<keyword id="KW-0002">3D-structure</keyword>
<keyword id="KW-0143">Chaperone</keyword>
<keyword id="KW-0903">Direct protein sequencing</keyword>
<keyword id="KW-1029">Fimbrium biogenesis</keyword>
<keyword id="KW-0393">Immunoglobulin domain</keyword>
<keyword id="KW-0574">Periplasm</keyword>
<keyword id="KW-1185">Reference proteome</keyword>
<keyword id="KW-0732">Signal</keyword>
<organism>
    <name type="scientific">Escherichia coli (strain K12)</name>
    <dbReference type="NCBI Taxonomy" id="83333"/>
    <lineage>
        <taxon>Bacteria</taxon>
        <taxon>Pseudomonadati</taxon>
        <taxon>Pseudomonadota</taxon>
        <taxon>Gammaproteobacteria</taxon>
        <taxon>Enterobacterales</taxon>
        <taxon>Enterobacteriaceae</taxon>
        <taxon>Escherichia</taxon>
    </lineage>
</organism>
<sequence>MSNKNVNVRKSQEITFCLLAGILMFMAMMVAGRAEAGVALGATRVIYPAGQKQEQLAVTNNDENSTYLIQSWVENADGVKDGRFIVTPPLFAMKGKKENTLRILDATNNQLPQDRESLFWMNVKAIPSMDKSKLTENTLQLAIISRIKLYYRPAKLALPPDQAAEKLRFRRSANSLTLINPTPYYLTVTELNAGTRVLENALVPPMGESTVKLPSDAGSNITYRTINDYGALTPKMTGVME</sequence>
<comment type="function">
    <text>Required for the biogenesis of type 1 fimbriae. Binds and interact with FimH.</text>
</comment>
<comment type="interaction">
    <interactant intactId="EBI-1028005">
        <id>P31697</id>
    </interactant>
    <interactant intactId="EBI-554889">
        <id>P30130</id>
        <label>fimD</label>
    </interactant>
    <organismsDiffer>false</organismsDiffer>
    <experiments>11</experiments>
</comment>
<comment type="interaction">
    <interactant intactId="EBI-1028005">
        <id>P31697</id>
    </interactant>
    <interactant intactId="EBI-1785843">
        <id>P08190</id>
        <label>fimG</label>
    </interactant>
    <organismsDiffer>false</organismsDiffer>
    <experiments>5</experiments>
</comment>
<comment type="interaction">
    <interactant intactId="EBI-1028005">
        <id>P31697</id>
    </interactant>
    <interactant intactId="EBI-1028015">
        <id>P08191</id>
        <label>fimH</label>
    </interactant>
    <organismsDiffer>false</organismsDiffer>
    <experiments>11</experiments>
</comment>
<comment type="interaction">
    <interactant intactId="EBI-1028005">
        <id>P31697</id>
    </interactant>
    <interactant intactId="EBI-8548126">
        <id>Q83UM2</id>
        <label>fimA</label>
    </interactant>
    <organismsDiffer>true</organismsDiffer>
    <experiments>2</experiments>
</comment>
<comment type="subcellular location">
    <subcellularLocation>
        <location>Periplasm</location>
    </subcellularLocation>
</comment>
<comment type="similarity">
    <text evidence="2">Belongs to the periplasmic pilus chaperone family.</text>
</comment>
<evidence type="ECO:0000269" key="1">
    <source>
    </source>
</evidence>
<evidence type="ECO:0000305" key="2"/>
<evidence type="ECO:0007829" key="3">
    <source>
        <dbReference type="PDB" id="1BF8"/>
    </source>
</evidence>
<evidence type="ECO:0007829" key="4">
    <source>
        <dbReference type="PDB" id="1KIU"/>
    </source>
</evidence>
<evidence type="ECO:0007829" key="5">
    <source>
        <dbReference type="PDB" id="3JWN"/>
    </source>
</evidence>
<evidence type="ECO:0007829" key="6">
    <source>
        <dbReference type="PDB" id="4DWH"/>
    </source>
</evidence>
<evidence type="ECO:0007829" key="7">
    <source>
        <dbReference type="PDB" id="7B0X"/>
    </source>
</evidence>
<feature type="signal peptide" evidence="1">
    <location>
        <begin position="1"/>
        <end position="36"/>
    </location>
</feature>
<feature type="chain" id="PRO_0000009273" description="Chaperone protein FimC">
    <location>
        <begin position="37"/>
        <end position="241"/>
    </location>
</feature>
<feature type="sequence variant" description="In strain: Clinical isolate 149 and O2:K1:H+ / MT78.">
    <original>M</original>
    <variation>V</variation>
    <location>
        <position position="29"/>
    </location>
</feature>
<feature type="sequence variant" description="In strain: Clinical isolate 149 and O2:K1:H+ / MT78.">
    <original>E</original>
    <variation>V</variation>
    <location>
        <position position="54"/>
    </location>
</feature>
<feature type="sequence variant" description="In strain: Clinical isolate 149 and O2:K1:H+ / MT78.">
    <original>T</original>
    <variation>A</variation>
    <location>
        <position position="210"/>
    </location>
</feature>
<feature type="sequence conflict" description="In Ref. 1; CAA35967." evidence="2" ref="1">
    <original>D</original>
    <variation>G</variation>
    <location>
        <position position="81"/>
    </location>
</feature>
<feature type="strand" evidence="7">
    <location>
        <begin position="38"/>
        <end position="41"/>
    </location>
</feature>
<feature type="strand" evidence="7">
    <location>
        <begin position="43"/>
        <end position="48"/>
    </location>
</feature>
<feature type="strand" evidence="7">
    <location>
        <begin position="52"/>
        <end position="60"/>
    </location>
</feature>
<feature type="strand" evidence="7">
    <location>
        <begin position="66"/>
        <end position="74"/>
    </location>
</feature>
<feature type="strand" evidence="3">
    <location>
        <begin position="76"/>
        <end position="78"/>
    </location>
</feature>
<feature type="strand" evidence="7">
    <location>
        <begin position="84"/>
        <end position="105"/>
    </location>
</feature>
<feature type="strand" evidence="7">
    <location>
        <begin position="113"/>
        <end position="115"/>
    </location>
</feature>
<feature type="strand" evidence="7">
    <location>
        <begin position="117"/>
        <end position="127"/>
    </location>
</feature>
<feature type="helix" evidence="7">
    <location>
        <begin position="131"/>
        <end position="135"/>
    </location>
</feature>
<feature type="strand" evidence="7">
    <location>
        <begin position="138"/>
        <end position="152"/>
    </location>
</feature>
<feature type="strand" evidence="3">
    <location>
        <begin position="156"/>
        <end position="158"/>
    </location>
</feature>
<feature type="helix" evidence="7">
    <location>
        <begin position="160"/>
        <end position="162"/>
    </location>
</feature>
<feature type="helix" evidence="7">
    <location>
        <begin position="164"/>
        <end position="166"/>
    </location>
</feature>
<feature type="strand" evidence="7">
    <location>
        <begin position="168"/>
        <end position="171"/>
    </location>
</feature>
<feature type="strand" evidence="7">
    <location>
        <begin position="173"/>
        <end position="180"/>
    </location>
</feature>
<feature type="strand" evidence="7">
    <location>
        <begin position="182"/>
        <end position="184"/>
    </location>
</feature>
<feature type="strand" evidence="7">
    <location>
        <begin position="186"/>
        <end position="193"/>
    </location>
</feature>
<feature type="strand" evidence="4">
    <location>
        <begin position="194"/>
        <end position="196"/>
    </location>
</feature>
<feature type="strand" evidence="7">
    <location>
        <begin position="201"/>
        <end position="203"/>
    </location>
</feature>
<feature type="strand" evidence="7">
    <location>
        <begin position="207"/>
        <end position="212"/>
    </location>
</feature>
<feature type="strand" evidence="5">
    <location>
        <begin position="215"/>
        <end position="217"/>
    </location>
</feature>
<feature type="strand" evidence="7">
    <location>
        <begin position="221"/>
        <end position="226"/>
    </location>
</feature>
<feature type="strand" evidence="6">
    <location>
        <begin position="236"/>
        <end position="239"/>
    </location>
</feature>